<evidence type="ECO:0000250" key="1"/>
<evidence type="ECO:0000250" key="2">
    <source>
        <dbReference type="UniProtKB" id="A1XRN2"/>
    </source>
</evidence>
<evidence type="ECO:0000250" key="3">
    <source>
        <dbReference type="UniProtKB" id="P21755"/>
    </source>
</evidence>
<evidence type="ECO:0000255" key="4"/>
<evidence type="ECO:0000255" key="5">
    <source>
        <dbReference type="PROSITE-ProRule" id="PRU00040"/>
    </source>
</evidence>
<evidence type="ECO:0000305" key="6"/>
<evidence type="ECO:0000305" key="7">
    <source ref="1"/>
</evidence>
<proteinExistence type="evidence at transcript level"/>
<comment type="function">
    <text evidence="1">This phospholipase A2 inhibitor binds directly phospholipase A2 in the presence or absence of calcium.</text>
</comment>
<comment type="subunit">
    <text evidence="2">Homotrimer; non-covalently linked.</text>
</comment>
<comment type="subcellular location">
    <subcellularLocation>
        <location evidence="7">Secreted</location>
    </subcellularLocation>
    <text evidence="6">Secreted in plasma.</text>
</comment>
<comment type="tissue specificity">
    <text evidence="7">Expressed by the liver.</text>
</comment>
<comment type="similarity">
    <text evidence="6">Belongs to the alpha-type phospholipase A2 inhibitor family.</text>
</comment>
<sequence>MRLILLSSLLLLGIFLADGDEVDPDGKVLNSLIYGVMHLQREFANLKGAFLTVHRARSFGSGSERLYVTNKEIKNFEALRQICEQAEGHIPSPQLENQNKAFANVLERHGKEAYLVVGDSANFTNWAAGEPNKAAGTCVKADTHGSWHSASCDDNLLVVCEFYFIL</sequence>
<protein>
    <recommendedName>
        <fullName>Phospholipase A2 inhibitor clone 05</fullName>
        <shortName>alpha-PLI</shortName>
    </recommendedName>
</protein>
<reference key="1">
    <citation type="submission" date="2008-01" db="EMBL/GenBank/DDBJ databases">
        <title>A profile of the phospholipase A2 inhibitors of the alpha class prospected in Brazilian Crotalidae snakes: structural and phylogenetic analysis.</title>
        <authorList>
            <person name="Estevao-Costa M.I."/>
            <person name="Costa M.A.F."/>
            <person name="Mudado M.A."/>
            <person name="Franco G.R."/>
            <person name="Fortes-Dias C.L."/>
        </authorList>
    </citation>
    <scope>NUCLEOTIDE SEQUENCE [MRNA]</scope>
    <source>
        <tissue>Liver</tissue>
    </source>
</reference>
<accession>B1A4P8</accession>
<organism>
    <name type="scientific">Bothrops moojeni</name>
    <name type="common">Lance-headed viper</name>
    <name type="synonym">Caissaca</name>
    <dbReference type="NCBI Taxonomy" id="98334"/>
    <lineage>
        <taxon>Eukaryota</taxon>
        <taxon>Metazoa</taxon>
        <taxon>Chordata</taxon>
        <taxon>Craniata</taxon>
        <taxon>Vertebrata</taxon>
        <taxon>Euteleostomi</taxon>
        <taxon>Lepidosauria</taxon>
        <taxon>Squamata</taxon>
        <taxon>Bifurcata</taxon>
        <taxon>Unidentata</taxon>
        <taxon>Episquamata</taxon>
        <taxon>Toxicofera</taxon>
        <taxon>Serpentes</taxon>
        <taxon>Colubroidea</taxon>
        <taxon>Viperidae</taxon>
        <taxon>Crotalinae</taxon>
        <taxon>Bothrops</taxon>
    </lineage>
</organism>
<dbReference type="EMBL" id="EU421922">
    <property type="protein sequence ID" value="ABZ82339.1"/>
    <property type="molecule type" value="mRNA"/>
</dbReference>
<dbReference type="SMR" id="B1A4P8"/>
<dbReference type="GO" id="GO:0005576">
    <property type="term" value="C:extracellular region"/>
    <property type="evidence" value="ECO:0007669"/>
    <property type="project" value="UniProtKB-SubCell"/>
</dbReference>
<dbReference type="GO" id="GO:0030246">
    <property type="term" value="F:carbohydrate binding"/>
    <property type="evidence" value="ECO:0007669"/>
    <property type="project" value="UniProtKB-KW"/>
</dbReference>
<dbReference type="GO" id="GO:0019834">
    <property type="term" value="F:phospholipase A2 inhibitor activity"/>
    <property type="evidence" value="ECO:0007669"/>
    <property type="project" value="UniProtKB-KW"/>
</dbReference>
<dbReference type="Gene3D" id="3.10.100.10">
    <property type="entry name" value="Mannose-Binding Protein A, subunit A"/>
    <property type="match status" value="1"/>
</dbReference>
<dbReference type="InterPro" id="IPR001304">
    <property type="entry name" value="C-type_lectin-like"/>
</dbReference>
<dbReference type="InterPro" id="IPR016186">
    <property type="entry name" value="C-type_lectin-like/link_sf"/>
</dbReference>
<dbReference type="InterPro" id="IPR018378">
    <property type="entry name" value="C-type_lectin_CS"/>
</dbReference>
<dbReference type="InterPro" id="IPR016187">
    <property type="entry name" value="CTDL_fold"/>
</dbReference>
<dbReference type="Pfam" id="PF00059">
    <property type="entry name" value="Lectin_C"/>
    <property type="match status" value="1"/>
</dbReference>
<dbReference type="SUPFAM" id="SSF56436">
    <property type="entry name" value="C-type lectin-like"/>
    <property type="match status" value="1"/>
</dbReference>
<dbReference type="PROSITE" id="PS00615">
    <property type="entry name" value="C_TYPE_LECTIN_1"/>
    <property type="match status" value="1"/>
</dbReference>
<dbReference type="PROSITE" id="PS50041">
    <property type="entry name" value="C_TYPE_LECTIN_2"/>
    <property type="match status" value="1"/>
</dbReference>
<name>PLIA5_BOTMO</name>
<keyword id="KW-0106">Calcium</keyword>
<keyword id="KW-1015">Disulfide bond</keyword>
<keyword id="KW-0325">Glycoprotein</keyword>
<keyword id="KW-0430">Lectin</keyword>
<keyword id="KW-0593">Phospholipase A2 inhibitor</keyword>
<keyword id="KW-0964">Secreted</keyword>
<keyword id="KW-0732">Signal</keyword>
<feature type="signal peptide" evidence="1">
    <location>
        <begin position="1"/>
        <end position="19"/>
    </location>
</feature>
<feature type="chain" id="PRO_0000356343" description="Phospholipase A2 inhibitor clone 05">
    <location>
        <begin position="20"/>
        <end position="166"/>
    </location>
</feature>
<feature type="domain" description="C-type lectin" evidence="5">
    <location>
        <begin position="46"/>
        <end position="161"/>
    </location>
</feature>
<feature type="glycosylation site" description="N-linked (GlcNAc...) asparagine" evidence="4">
    <location>
        <position position="122"/>
    </location>
</feature>
<feature type="disulfide bond" evidence="3">
    <location>
        <begin position="83"/>
        <end position="160"/>
    </location>
</feature>
<feature type="disulfide bond" evidence="3">
    <location>
        <begin position="138"/>
        <end position="152"/>
    </location>
</feature>